<reference key="1">
    <citation type="submission" date="2007-02" db="EMBL/GenBank/DDBJ databases">
        <title>Complete sequence of chromosome of Yersinia pestis Pestoides F.</title>
        <authorList>
            <consortium name="US DOE Joint Genome Institute"/>
            <person name="Copeland A."/>
            <person name="Lucas S."/>
            <person name="Lapidus A."/>
            <person name="Barry K."/>
            <person name="Detter J.C."/>
            <person name="Glavina del Rio T."/>
            <person name="Hammon N."/>
            <person name="Israni S."/>
            <person name="Dalin E."/>
            <person name="Tice H."/>
            <person name="Pitluck S."/>
            <person name="Di Bartolo G."/>
            <person name="Chain P."/>
            <person name="Malfatti S."/>
            <person name="Shin M."/>
            <person name="Vergez L."/>
            <person name="Schmutz J."/>
            <person name="Larimer F."/>
            <person name="Land M."/>
            <person name="Hauser L."/>
            <person name="Worsham P."/>
            <person name="Chu M."/>
            <person name="Bearden S."/>
            <person name="Garcia E."/>
            <person name="Richardson P."/>
        </authorList>
    </citation>
    <scope>NUCLEOTIDE SEQUENCE [LARGE SCALE GENOMIC DNA]</scope>
    <source>
        <strain>Pestoides F</strain>
    </source>
</reference>
<feature type="chain" id="PRO_1000046757" description="UPF0303 protein YPDSF_1944">
    <location>
        <begin position="1"/>
        <end position="171"/>
    </location>
</feature>
<name>Y1944_YERPP</name>
<comment type="similarity">
    <text evidence="1">Belongs to the UPF0303 family.</text>
</comment>
<protein>
    <recommendedName>
        <fullName evidence="1">UPF0303 protein YPDSF_1944</fullName>
    </recommendedName>
</protein>
<proteinExistence type="inferred from homology"/>
<dbReference type="EMBL" id="CP000668">
    <property type="protein sequence ID" value="ABP40327.1"/>
    <property type="molecule type" value="Genomic_DNA"/>
</dbReference>
<dbReference type="RefSeq" id="WP_002210255.1">
    <property type="nucleotide sequence ID" value="NZ_CP009715.1"/>
</dbReference>
<dbReference type="SMR" id="A4TM15"/>
<dbReference type="KEGG" id="ypp:YPDSF_1944"/>
<dbReference type="PATRIC" id="fig|386656.14.peg.3405"/>
<dbReference type="FunFam" id="3.30.450.150:FF:000003">
    <property type="entry name" value="UPF0303 protein YPTS_2661"/>
    <property type="match status" value="1"/>
</dbReference>
<dbReference type="Gene3D" id="3.30.450.150">
    <property type="entry name" value="Haem-degrading domain"/>
    <property type="match status" value="1"/>
</dbReference>
<dbReference type="HAMAP" id="MF_00761">
    <property type="entry name" value="UPF0303"/>
    <property type="match status" value="1"/>
</dbReference>
<dbReference type="InterPro" id="IPR005624">
    <property type="entry name" value="PduO/GlcC-like"/>
</dbReference>
<dbReference type="InterPro" id="IPR038084">
    <property type="entry name" value="PduO/GlcC-like_sf"/>
</dbReference>
<dbReference type="InterPro" id="IPR010371">
    <property type="entry name" value="YBR137W-like"/>
</dbReference>
<dbReference type="NCBIfam" id="NF002694">
    <property type="entry name" value="PRK02487.1-3"/>
    <property type="match status" value="1"/>
</dbReference>
<dbReference type="NCBIfam" id="NF002696">
    <property type="entry name" value="PRK02487.1-5"/>
    <property type="match status" value="1"/>
</dbReference>
<dbReference type="PANTHER" id="PTHR28255">
    <property type="match status" value="1"/>
</dbReference>
<dbReference type="PANTHER" id="PTHR28255:SF1">
    <property type="entry name" value="UPF0303 PROTEIN YBR137W"/>
    <property type="match status" value="1"/>
</dbReference>
<dbReference type="Pfam" id="PF03928">
    <property type="entry name" value="HbpS-like"/>
    <property type="match status" value="1"/>
</dbReference>
<dbReference type="PIRSF" id="PIRSF008757">
    <property type="entry name" value="UCP008757"/>
    <property type="match status" value="1"/>
</dbReference>
<dbReference type="SUPFAM" id="SSF143744">
    <property type="entry name" value="GlcG-like"/>
    <property type="match status" value="1"/>
</dbReference>
<organism>
    <name type="scientific">Yersinia pestis (strain Pestoides F)</name>
    <dbReference type="NCBI Taxonomy" id="386656"/>
    <lineage>
        <taxon>Bacteria</taxon>
        <taxon>Pseudomonadati</taxon>
        <taxon>Pseudomonadota</taxon>
        <taxon>Gammaproteobacteria</taxon>
        <taxon>Enterobacterales</taxon>
        <taxon>Yersiniaceae</taxon>
        <taxon>Yersinia</taxon>
    </lineage>
</organism>
<sequence>MNLQQQLAYCQQHQQRLQLRHFDNETAWQLGEKIKRQAEKQGVALAIDITVNHQTLFSYAMAGTCAENQDWLRRKRNVVELLSTSSYAAGLMLQQRETSLDARYGVSLRDYAALGGAFPLQIKQAGIIGSVNVSGAPHLDDHNLLLQVLADFVGLPTGSIELLTPLTPLSA</sequence>
<evidence type="ECO:0000255" key="1">
    <source>
        <dbReference type="HAMAP-Rule" id="MF_00761"/>
    </source>
</evidence>
<gene>
    <name type="ordered locus">YPDSF_1944</name>
</gene>
<accession>A4TM15</accession>